<feature type="chain" id="PRO_0000415118" description="S-methyl-5'-thioadenosine phosphorylase">
    <location>
        <begin position="1"/>
        <end position="279"/>
    </location>
</feature>
<feature type="binding site" evidence="1">
    <location>
        <position position="13"/>
    </location>
    <ligand>
        <name>phosphate</name>
        <dbReference type="ChEBI" id="CHEBI:43474"/>
    </ligand>
</feature>
<feature type="binding site" evidence="1">
    <location>
        <begin position="55"/>
        <end position="56"/>
    </location>
    <ligand>
        <name>phosphate</name>
        <dbReference type="ChEBI" id="CHEBI:43474"/>
    </ligand>
</feature>
<feature type="binding site" evidence="1">
    <location>
        <begin position="88"/>
        <end position="89"/>
    </location>
    <ligand>
        <name>phosphate</name>
        <dbReference type="ChEBI" id="CHEBI:43474"/>
    </ligand>
</feature>
<feature type="binding site" evidence="1">
    <location>
        <position position="191"/>
    </location>
    <ligand>
        <name>substrate</name>
    </ligand>
</feature>
<feature type="binding site" evidence="1">
    <location>
        <position position="192"/>
    </location>
    <ligand>
        <name>phosphate</name>
        <dbReference type="ChEBI" id="CHEBI:43474"/>
    </ligand>
</feature>
<feature type="binding site" evidence="1">
    <location>
        <begin position="215"/>
        <end position="217"/>
    </location>
    <ligand>
        <name>substrate</name>
    </ligand>
</feature>
<feature type="site" description="Important for substrate specificity" evidence="1">
    <location>
        <position position="173"/>
    </location>
</feature>
<feature type="site" description="Important for substrate specificity" evidence="1">
    <location>
        <position position="228"/>
    </location>
</feature>
<sequence length="279" mass="30473">MGTKVKIGIIGGSGLDDSQIIENRTERVVNTHFGIPSDVLIEGKIAGVECVLLARHGRNHSIMPTNVNYRANIWALKTLGCTHVLVSTATGSLRDEIHPGDIVIPDNFIDRTTKRVQTFYDGNELLVGVCHIPMEPAFCSRTRDVLIETARELGIAGVHNSGTVVTIEGPRFSSKAESNLFRQWGAHLVNMTLVPEVVLAKEAGLCYAAIAMATDYDCWRETGEDVNVADVLATFKKNVTKVTELIINAIPKIAALDWTETIEELAKTVNTSIMLPHSN</sequence>
<name>MTAP_ANODA</name>
<proteinExistence type="inferred from homology"/>
<evidence type="ECO:0000255" key="1">
    <source>
        <dbReference type="HAMAP-Rule" id="MF_03155"/>
    </source>
</evidence>
<accession>E3XFR6</accession>
<accession>W5J9D8</accession>
<keyword id="KW-0963">Cytoplasm</keyword>
<keyword id="KW-0328">Glycosyltransferase</keyword>
<keyword id="KW-0539">Nucleus</keyword>
<keyword id="KW-0660">Purine salvage</keyword>
<keyword id="KW-1185">Reference proteome</keyword>
<keyword id="KW-0808">Transferase</keyword>
<organism>
    <name type="scientific">Anopheles darlingi</name>
    <name type="common">Mosquito</name>
    <dbReference type="NCBI Taxonomy" id="43151"/>
    <lineage>
        <taxon>Eukaryota</taxon>
        <taxon>Metazoa</taxon>
        <taxon>Ecdysozoa</taxon>
        <taxon>Arthropoda</taxon>
        <taxon>Hexapoda</taxon>
        <taxon>Insecta</taxon>
        <taxon>Pterygota</taxon>
        <taxon>Neoptera</taxon>
        <taxon>Endopterygota</taxon>
        <taxon>Diptera</taxon>
        <taxon>Nematocera</taxon>
        <taxon>Culicoidea</taxon>
        <taxon>Culicidae</taxon>
        <taxon>Anophelinae</taxon>
        <taxon>Anopheles</taxon>
    </lineage>
</organism>
<comment type="function">
    <text evidence="1">Catalyzes the reversible phosphorylation of S-methyl-5'-thioadenosine (MTA) to adenine and 5-methylthioribose-1-phosphate. Involved in the breakdown of MTA, a major by-product of polyamine biosynthesis. Responsible for the first step in the methionine salvage pathway after MTA has been generated from S-adenosylmethionine. Has broad substrate specificity with 6-aminopurine nucleosides as preferred substrates.</text>
</comment>
<comment type="catalytic activity">
    <reaction evidence="1">
        <text>S-methyl-5'-thioadenosine + phosphate = 5-(methylsulfanyl)-alpha-D-ribose 1-phosphate + adenine</text>
        <dbReference type="Rhea" id="RHEA:11852"/>
        <dbReference type="ChEBI" id="CHEBI:16708"/>
        <dbReference type="ChEBI" id="CHEBI:17509"/>
        <dbReference type="ChEBI" id="CHEBI:43474"/>
        <dbReference type="ChEBI" id="CHEBI:58533"/>
        <dbReference type="EC" id="2.4.2.28"/>
    </reaction>
</comment>
<comment type="pathway">
    <text evidence="1">Amino-acid biosynthesis; L-methionine biosynthesis via salvage pathway; S-methyl-5-thio-alpha-D-ribose 1-phosphate from S-methyl-5'-thioadenosine (phosphorylase route): step 1/1.</text>
</comment>
<comment type="subunit">
    <text evidence="1">Homotrimer.</text>
</comment>
<comment type="subcellular location">
    <subcellularLocation>
        <location evidence="1">Cytoplasm</location>
    </subcellularLocation>
    <subcellularLocation>
        <location evidence="1">Nucleus</location>
    </subcellularLocation>
</comment>
<comment type="similarity">
    <text evidence="1">Belongs to the PNP/MTAP phosphorylase family. MTAP subfamily.</text>
</comment>
<protein>
    <recommendedName>
        <fullName evidence="1">S-methyl-5'-thioadenosine phosphorylase</fullName>
        <ecNumber evidence="1">2.4.2.28</ecNumber>
    </recommendedName>
    <alternativeName>
        <fullName evidence="1">5'-methylthioadenosine phosphorylase</fullName>
        <shortName evidence="1">MTA phosphorylase</shortName>
        <shortName evidence="1">MTAP</shortName>
        <shortName evidence="1">MTAPase</shortName>
    </alternativeName>
</protein>
<dbReference type="EC" id="2.4.2.28" evidence="1"/>
<dbReference type="EMBL" id="ADMH02002078">
    <property type="protein sequence ID" value="ETN59465.1"/>
    <property type="molecule type" value="Genomic_DNA"/>
</dbReference>
<dbReference type="SMR" id="E3XFR6"/>
<dbReference type="FunCoup" id="E3XFR6">
    <property type="interactions" value="1237"/>
</dbReference>
<dbReference type="STRING" id="43151.E3XFR6"/>
<dbReference type="EnsemblMetazoa" id="ADAC008941-RA">
    <property type="protein sequence ID" value="ADAC008941-PA"/>
    <property type="gene ID" value="ADAC008941"/>
</dbReference>
<dbReference type="VEuPathDB" id="VectorBase:ADAC008941"/>
<dbReference type="VEuPathDB" id="VectorBase:ADAR2_003938"/>
<dbReference type="eggNOG" id="KOG3985">
    <property type="taxonomic scope" value="Eukaryota"/>
</dbReference>
<dbReference type="InParanoid" id="E3XFR6"/>
<dbReference type="OMA" id="ADPFCPE"/>
<dbReference type="OrthoDB" id="431409at2759"/>
<dbReference type="UniPathway" id="UPA00904">
    <property type="reaction ID" value="UER00873"/>
</dbReference>
<dbReference type="Proteomes" id="UP000000673">
    <property type="component" value="Unassembled WGS sequence"/>
</dbReference>
<dbReference type="GO" id="GO:0005829">
    <property type="term" value="C:cytosol"/>
    <property type="evidence" value="ECO:0007669"/>
    <property type="project" value="TreeGrafter"/>
</dbReference>
<dbReference type="GO" id="GO:0005634">
    <property type="term" value="C:nucleus"/>
    <property type="evidence" value="ECO:0007669"/>
    <property type="project" value="UniProtKB-SubCell"/>
</dbReference>
<dbReference type="GO" id="GO:0017061">
    <property type="term" value="F:S-methyl-5-thioadenosine phosphorylase activity"/>
    <property type="evidence" value="ECO:0007669"/>
    <property type="project" value="UniProtKB-UniRule"/>
</dbReference>
<dbReference type="GO" id="GO:0019509">
    <property type="term" value="P:L-methionine salvage from methylthioadenosine"/>
    <property type="evidence" value="ECO:0007669"/>
    <property type="project" value="UniProtKB-UniRule"/>
</dbReference>
<dbReference type="GO" id="GO:0006166">
    <property type="term" value="P:purine ribonucleoside salvage"/>
    <property type="evidence" value="ECO:0007669"/>
    <property type="project" value="UniProtKB-KW"/>
</dbReference>
<dbReference type="CDD" id="cd09010">
    <property type="entry name" value="MTAP_SsMTAPII_like_MTIP"/>
    <property type="match status" value="1"/>
</dbReference>
<dbReference type="FunFam" id="3.40.50.1580:FF:000006">
    <property type="entry name" value="Purine nucleoside phosphorylase"/>
    <property type="match status" value="1"/>
</dbReference>
<dbReference type="Gene3D" id="3.40.50.1580">
    <property type="entry name" value="Nucleoside phosphorylase domain"/>
    <property type="match status" value="1"/>
</dbReference>
<dbReference type="HAMAP" id="MF_01963">
    <property type="entry name" value="MTAP"/>
    <property type="match status" value="1"/>
</dbReference>
<dbReference type="InterPro" id="IPR010044">
    <property type="entry name" value="MTAP"/>
</dbReference>
<dbReference type="InterPro" id="IPR000845">
    <property type="entry name" value="Nucleoside_phosphorylase_d"/>
</dbReference>
<dbReference type="InterPro" id="IPR035994">
    <property type="entry name" value="Nucleoside_phosphorylase_sf"/>
</dbReference>
<dbReference type="InterPro" id="IPR018099">
    <property type="entry name" value="Purine_phosphorylase-2_CS"/>
</dbReference>
<dbReference type="NCBIfam" id="TIGR01694">
    <property type="entry name" value="MTAP"/>
    <property type="match status" value="1"/>
</dbReference>
<dbReference type="PANTHER" id="PTHR42679">
    <property type="entry name" value="S-METHYL-5'-THIOADENOSINE PHOSPHORYLASE"/>
    <property type="match status" value="1"/>
</dbReference>
<dbReference type="PANTHER" id="PTHR42679:SF2">
    <property type="entry name" value="S-METHYL-5'-THIOADENOSINE PHOSPHORYLASE"/>
    <property type="match status" value="1"/>
</dbReference>
<dbReference type="Pfam" id="PF01048">
    <property type="entry name" value="PNP_UDP_1"/>
    <property type="match status" value="1"/>
</dbReference>
<dbReference type="SUPFAM" id="SSF53167">
    <property type="entry name" value="Purine and uridine phosphorylases"/>
    <property type="match status" value="1"/>
</dbReference>
<dbReference type="PROSITE" id="PS01240">
    <property type="entry name" value="PNP_MTAP_2"/>
    <property type="match status" value="1"/>
</dbReference>
<gene>
    <name type="ORF">AND_22863</name>
</gene>
<reference key="1">
    <citation type="journal article" date="2010" name="BMC Genomics">
        <title>Combination of measures distinguishes pre-miRNAs from other stem-loops in the genome of the newly sequenced Anopheles darlingi.</title>
        <authorList>
            <person name="Mendes N.D."/>
            <person name="Freitas A.T."/>
            <person name="Vasconcelos A.T."/>
            <person name="Sagot M.F."/>
        </authorList>
    </citation>
    <scope>NUCLEOTIDE SEQUENCE [LARGE SCALE GENOMIC DNA]</scope>
</reference>